<gene>
    <name evidence="1" type="primary">mobA</name>
    <name type="ordered locus">Dole_3175</name>
</gene>
<comment type="function">
    <text evidence="1">Transfers a GMP moiety from GTP to Mo-molybdopterin (Mo-MPT) cofactor (Moco or molybdenum cofactor) to form Mo-molybdopterin guanine dinucleotide (Mo-MGD) cofactor.</text>
</comment>
<comment type="catalytic activity">
    <reaction evidence="1">
        <text>Mo-molybdopterin + GTP + H(+) = Mo-molybdopterin guanine dinucleotide + diphosphate</text>
        <dbReference type="Rhea" id="RHEA:34243"/>
        <dbReference type="ChEBI" id="CHEBI:15378"/>
        <dbReference type="ChEBI" id="CHEBI:33019"/>
        <dbReference type="ChEBI" id="CHEBI:37565"/>
        <dbReference type="ChEBI" id="CHEBI:71302"/>
        <dbReference type="ChEBI" id="CHEBI:71310"/>
        <dbReference type="EC" id="2.7.7.77"/>
    </reaction>
</comment>
<comment type="cofactor">
    <cofactor evidence="1">
        <name>Mg(2+)</name>
        <dbReference type="ChEBI" id="CHEBI:18420"/>
    </cofactor>
</comment>
<comment type="subunit">
    <text evidence="1">Monomer.</text>
</comment>
<comment type="subcellular location">
    <subcellularLocation>
        <location evidence="1">Cytoplasm</location>
    </subcellularLocation>
</comment>
<comment type="domain">
    <text evidence="1">The N-terminal domain determines nucleotide recognition and specific binding, while the C-terminal domain determines the specific binding to the target protein.</text>
</comment>
<comment type="similarity">
    <text evidence="1">Belongs to the MobA family.</text>
</comment>
<dbReference type="EC" id="2.7.7.77" evidence="1"/>
<dbReference type="EMBL" id="CP000859">
    <property type="protein sequence ID" value="ABW68978.1"/>
    <property type="molecule type" value="Genomic_DNA"/>
</dbReference>
<dbReference type="RefSeq" id="WP_012176588.1">
    <property type="nucleotide sequence ID" value="NC_009943.1"/>
</dbReference>
<dbReference type="SMR" id="A9A059"/>
<dbReference type="STRING" id="96561.Dole_3175"/>
<dbReference type="KEGG" id="dol:Dole_3175"/>
<dbReference type="eggNOG" id="COG0746">
    <property type="taxonomic scope" value="Bacteria"/>
</dbReference>
<dbReference type="HOGENOM" id="CLU_055597_2_1_7"/>
<dbReference type="Proteomes" id="UP000008561">
    <property type="component" value="Chromosome"/>
</dbReference>
<dbReference type="GO" id="GO:0005737">
    <property type="term" value="C:cytoplasm"/>
    <property type="evidence" value="ECO:0007669"/>
    <property type="project" value="UniProtKB-SubCell"/>
</dbReference>
<dbReference type="GO" id="GO:0005525">
    <property type="term" value="F:GTP binding"/>
    <property type="evidence" value="ECO:0007669"/>
    <property type="project" value="UniProtKB-UniRule"/>
</dbReference>
<dbReference type="GO" id="GO:0046872">
    <property type="term" value="F:metal ion binding"/>
    <property type="evidence" value="ECO:0007669"/>
    <property type="project" value="UniProtKB-KW"/>
</dbReference>
<dbReference type="GO" id="GO:0061603">
    <property type="term" value="F:molybdenum cofactor guanylyltransferase activity"/>
    <property type="evidence" value="ECO:0007669"/>
    <property type="project" value="UniProtKB-EC"/>
</dbReference>
<dbReference type="GO" id="GO:0006777">
    <property type="term" value="P:Mo-molybdopterin cofactor biosynthetic process"/>
    <property type="evidence" value="ECO:0007669"/>
    <property type="project" value="UniProtKB-KW"/>
</dbReference>
<dbReference type="CDD" id="cd02503">
    <property type="entry name" value="MobA"/>
    <property type="match status" value="1"/>
</dbReference>
<dbReference type="Gene3D" id="3.90.550.10">
    <property type="entry name" value="Spore Coat Polysaccharide Biosynthesis Protein SpsA, Chain A"/>
    <property type="match status" value="1"/>
</dbReference>
<dbReference type="HAMAP" id="MF_00316">
    <property type="entry name" value="MobA"/>
    <property type="match status" value="1"/>
</dbReference>
<dbReference type="InterPro" id="IPR025877">
    <property type="entry name" value="MobA-like_NTP_Trfase"/>
</dbReference>
<dbReference type="InterPro" id="IPR013482">
    <property type="entry name" value="Molybde_CF_guanTrfase"/>
</dbReference>
<dbReference type="InterPro" id="IPR029044">
    <property type="entry name" value="Nucleotide-diphossugar_trans"/>
</dbReference>
<dbReference type="PANTHER" id="PTHR19136">
    <property type="entry name" value="MOLYBDENUM COFACTOR GUANYLYLTRANSFERASE"/>
    <property type="match status" value="1"/>
</dbReference>
<dbReference type="PANTHER" id="PTHR19136:SF81">
    <property type="entry name" value="MOLYBDENUM COFACTOR GUANYLYLTRANSFERASE"/>
    <property type="match status" value="1"/>
</dbReference>
<dbReference type="Pfam" id="PF12804">
    <property type="entry name" value="NTP_transf_3"/>
    <property type="match status" value="1"/>
</dbReference>
<dbReference type="SUPFAM" id="SSF53448">
    <property type="entry name" value="Nucleotide-diphospho-sugar transferases"/>
    <property type="match status" value="1"/>
</dbReference>
<proteinExistence type="inferred from homology"/>
<reference key="1">
    <citation type="submission" date="2007-10" db="EMBL/GenBank/DDBJ databases">
        <title>Complete sequence of Desulfococcus oleovorans Hxd3.</title>
        <authorList>
            <consortium name="US DOE Joint Genome Institute"/>
            <person name="Copeland A."/>
            <person name="Lucas S."/>
            <person name="Lapidus A."/>
            <person name="Barry K."/>
            <person name="Glavina del Rio T."/>
            <person name="Dalin E."/>
            <person name="Tice H."/>
            <person name="Pitluck S."/>
            <person name="Kiss H."/>
            <person name="Brettin T."/>
            <person name="Bruce D."/>
            <person name="Detter J.C."/>
            <person name="Han C."/>
            <person name="Schmutz J."/>
            <person name="Larimer F."/>
            <person name="Land M."/>
            <person name="Hauser L."/>
            <person name="Kyrpides N."/>
            <person name="Kim E."/>
            <person name="Wawrik B."/>
            <person name="Richardson P."/>
        </authorList>
    </citation>
    <scope>NUCLEOTIDE SEQUENCE [LARGE SCALE GENOMIC DNA]</scope>
    <source>
        <strain>DSM 6200 / JCM 39069 / Hxd3</strain>
    </source>
</reference>
<accession>A9A059</accession>
<protein>
    <recommendedName>
        <fullName evidence="1">Molybdenum cofactor guanylyltransferase</fullName>
        <shortName evidence="1">MoCo guanylyltransferase</shortName>
        <ecNumber evidence="1">2.7.7.77</ecNumber>
    </recommendedName>
    <alternativeName>
        <fullName evidence="1">GTP:molybdopterin guanylyltransferase</fullName>
    </alternativeName>
    <alternativeName>
        <fullName evidence="1">Mo-MPT guanylyltransferase</fullName>
    </alternativeName>
    <alternativeName>
        <fullName evidence="1">Molybdopterin guanylyltransferase</fullName>
    </alternativeName>
    <alternativeName>
        <fullName evidence="1">Molybdopterin-guanine dinucleotide synthase</fullName>
        <shortName evidence="1">MGD synthase</shortName>
    </alternativeName>
</protein>
<sequence>MDAVTGIILAGGESRRFGGGNKAFRMLDGRTMIDRVHDTVKSVCDDMVIVANTPLDYLGWNAVLATDLFDFRGSLVGIHAGLMSAGHEYAFISACDTPFLKQAVIKTIIGGIEDHIDVVVPEKKEGMEPLCAVYSRRCLEVIERHLHQGRMVIKAVYNKLRVRTISEKRLRAVDPDLVSFWNINTKEELEKAEAAIKAGRIS</sequence>
<organism>
    <name type="scientific">Desulfosudis oleivorans (strain DSM 6200 / JCM 39069 / Hxd3)</name>
    <name type="common">Desulfococcus oleovorans</name>
    <dbReference type="NCBI Taxonomy" id="96561"/>
    <lineage>
        <taxon>Bacteria</taxon>
        <taxon>Pseudomonadati</taxon>
        <taxon>Thermodesulfobacteriota</taxon>
        <taxon>Desulfobacteria</taxon>
        <taxon>Desulfobacterales</taxon>
        <taxon>Desulfosudaceae</taxon>
        <taxon>Desulfosudis</taxon>
    </lineage>
</organism>
<feature type="chain" id="PRO_1000115797" description="Molybdenum cofactor guanylyltransferase">
    <location>
        <begin position="1"/>
        <end position="202"/>
    </location>
</feature>
<feature type="binding site" evidence="1">
    <location>
        <begin position="9"/>
        <end position="11"/>
    </location>
    <ligand>
        <name>GTP</name>
        <dbReference type="ChEBI" id="CHEBI:37565"/>
    </ligand>
</feature>
<feature type="binding site" evidence="1">
    <location>
        <position position="22"/>
    </location>
    <ligand>
        <name>GTP</name>
        <dbReference type="ChEBI" id="CHEBI:37565"/>
    </ligand>
</feature>
<feature type="binding site" evidence="1">
    <location>
        <position position="70"/>
    </location>
    <ligand>
        <name>GTP</name>
        <dbReference type="ChEBI" id="CHEBI:37565"/>
    </ligand>
</feature>
<feature type="binding site" evidence="1">
    <location>
        <position position="96"/>
    </location>
    <ligand>
        <name>GTP</name>
        <dbReference type="ChEBI" id="CHEBI:37565"/>
    </ligand>
</feature>
<feature type="binding site" evidence="1">
    <location>
        <position position="96"/>
    </location>
    <ligand>
        <name>Mg(2+)</name>
        <dbReference type="ChEBI" id="CHEBI:18420"/>
    </ligand>
</feature>
<name>MOBA_DESOH</name>
<evidence type="ECO:0000255" key="1">
    <source>
        <dbReference type="HAMAP-Rule" id="MF_00316"/>
    </source>
</evidence>
<keyword id="KW-0963">Cytoplasm</keyword>
<keyword id="KW-0342">GTP-binding</keyword>
<keyword id="KW-0460">Magnesium</keyword>
<keyword id="KW-0479">Metal-binding</keyword>
<keyword id="KW-0501">Molybdenum cofactor biosynthesis</keyword>
<keyword id="KW-0547">Nucleotide-binding</keyword>
<keyword id="KW-1185">Reference proteome</keyword>
<keyword id="KW-0808">Transferase</keyword>